<organism>
    <name type="scientific">Corynebacterium efficiens (strain DSM 44549 / YS-314 / AJ 12310 / JCM 11189 / NBRC 100395)</name>
    <dbReference type="NCBI Taxonomy" id="196164"/>
    <lineage>
        <taxon>Bacteria</taxon>
        <taxon>Bacillati</taxon>
        <taxon>Actinomycetota</taxon>
        <taxon>Actinomycetes</taxon>
        <taxon>Mycobacteriales</taxon>
        <taxon>Corynebacteriaceae</taxon>
        <taxon>Corynebacterium</taxon>
    </lineage>
</organism>
<keyword id="KW-0028">Amino-acid biosynthesis</keyword>
<keyword id="KW-0055">Arginine biosynthesis</keyword>
<keyword id="KW-0067">ATP-binding</keyword>
<keyword id="KW-0963">Cytoplasm</keyword>
<keyword id="KW-0436">Ligase</keyword>
<keyword id="KW-0547">Nucleotide-binding</keyword>
<keyword id="KW-1185">Reference proteome</keyword>
<accession>Q8FTM9</accession>
<comment type="catalytic activity">
    <reaction evidence="1">
        <text>L-citrulline + L-aspartate + ATP = 2-(N(omega)-L-arginino)succinate + AMP + diphosphate + H(+)</text>
        <dbReference type="Rhea" id="RHEA:10932"/>
        <dbReference type="ChEBI" id="CHEBI:15378"/>
        <dbReference type="ChEBI" id="CHEBI:29991"/>
        <dbReference type="ChEBI" id="CHEBI:30616"/>
        <dbReference type="ChEBI" id="CHEBI:33019"/>
        <dbReference type="ChEBI" id="CHEBI:57472"/>
        <dbReference type="ChEBI" id="CHEBI:57743"/>
        <dbReference type="ChEBI" id="CHEBI:456215"/>
        <dbReference type="EC" id="6.3.4.5"/>
    </reaction>
</comment>
<comment type="pathway">
    <text evidence="1">Amino-acid biosynthesis; L-arginine biosynthesis; L-arginine from L-ornithine and carbamoyl phosphate: step 2/3.</text>
</comment>
<comment type="subunit">
    <text evidence="1">Homotetramer.</text>
</comment>
<comment type="subcellular location">
    <subcellularLocation>
        <location evidence="1">Cytoplasm</location>
    </subcellularLocation>
</comment>
<comment type="similarity">
    <text evidence="1">Belongs to the argininosuccinate synthase family. Type 1 subfamily.</text>
</comment>
<sequence>MTNRVVLAYSGGLDTSVAIPYLSKMTGGEVVAVSLDLGQGGEDMESVRQRALDCGAVESIVIDAKDEFAEEYCLPTIKANGMYMKQYPLVSAISRPLIVKHLVQAAKEHGGTHVSHGCTGKGNDQVRFEVGFMDLDPSLEIIAPARDYAWTRDKAIEFAEENNVPIEQSAASPFSIDQNVWGRAIETGFLEDLWNPPTKDLYAYTEDPALGNAPDEVIITFKSGKPVAIDGRPVTMLEAIEELNRRGGAQGVGRLDMVEDRLVGIKSREIYEAPGAIILITAHEAMEDVTIERELARYKRGIDARWSEEVYDGLWFGPLKRSLDAFIESTQEHVTGDIRLVLHAGKVTVNGRRSGSSLYDFNLATYDTGDTFDQTAAKGFVQLHGLSSKIANKRDREAGEN</sequence>
<name>ASSY_COREF</name>
<reference key="1">
    <citation type="journal article" date="2003" name="Genome Res.">
        <title>Comparative complete genome sequence analysis of the amino acid replacements responsible for the thermostability of Corynebacterium efficiens.</title>
        <authorList>
            <person name="Nishio Y."/>
            <person name="Nakamura Y."/>
            <person name="Kawarabayasi Y."/>
            <person name="Usuda Y."/>
            <person name="Kimura E."/>
            <person name="Sugimoto S."/>
            <person name="Matsui K."/>
            <person name="Yamagishi A."/>
            <person name="Kikuchi H."/>
            <person name="Ikeo K."/>
            <person name="Gojobori T."/>
        </authorList>
    </citation>
    <scope>NUCLEOTIDE SEQUENCE [LARGE SCALE GENOMIC DNA]</scope>
    <source>
        <strain>DSM 44549 / YS-314 / AJ 12310 / JCM 11189 / NBRC 100395</strain>
    </source>
</reference>
<evidence type="ECO:0000255" key="1">
    <source>
        <dbReference type="HAMAP-Rule" id="MF_00005"/>
    </source>
</evidence>
<dbReference type="EC" id="6.3.4.5" evidence="1"/>
<dbReference type="EMBL" id="BA000035">
    <property type="protein sequence ID" value="BAC18342.1"/>
    <property type="molecule type" value="Genomic_DNA"/>
</dbReference>
<dbReference type="RefSeq" id="WP_006770442.1">
    <property type="nucleotide sequence ID" value="NC_004369.1"/>
</dbReference>
<dbReference type="SMR" id="Q8FTM9"/>
<dbReference type="STRING" id="196164.gene:10741947"/>
<dbReference type="KEGG" id="cef:CE1532"/>
<dbReference type="eggNOG" id="COG0137">
    <property type="taxonomic scope" value="Bacteria"/>
</dbReference>
<dbReference type="HOGENOM" id="CLU_032784_4_2_11"/>
<dbReference type="OrthoDB" id="9801641at2"/>
<dbReference type="UniPathway" id="UPA00068">
    <property type="reaction ID" value="UER00113"/>
</dbReference>
<dbReference type="Proteomes" id="UP000001409">
    <property type="component" value="Chromosome"/>
</dbReference>
<dbReference type="GO" id="GO:0005737">
    <property type="term" value="C:cytoplasm"/>
    <property type="evidence" value="ECO:0007669"/>
    <property type="project" value="UniProtKB-SubCell"/>
</dbReference>
<dbReference type="GO" id="GO:0004055">
    <property type="term" value="F:argininosuccinate synthase activity"/>
    <property type="evidence" value="ECO:0007669"/>
    <property type="project" value="UniProtKB-UniRule"/>
</dbReference>
<dbReference type="GO" id="GO:0005524">
    <property type="term" value="F:ATP binding"/>
    <property type="evidence" value="ECO:0007669"/>
    <property type="project" value="UniProtKB-UniRule"/>
</dbReference>
<dbReference type="GO" id="GO:0000053">
    <property type="term" value="P:argininosuccinate metabolic process"/>
    <property type="evidence" value="ECO:0007669"/>
    <property type="project" value="TreeGrafter"/>
</dbReference>
<dbReference type="GO" id="GO:0006526">
    <property type="term" value="P:L-arginine biosynthetic process"/>
    <property type="evidence" value="ECO:0007669"/>
    <property type="project" value="UniProtKB-UniRule"/>
</dbReference>
<dbReference type="GO" id="GO:0000050">
    <property type="term" value="P:urea cycle"/>
    <property type="evidence" value="ECO:0007669"/>
    <property type="project" value="TreeGrafter"/>
</dbReference>
<dbReference type="CDD" id="cd01999">
    <property type="entry name" value="ASS"/>
    <property type="match status" value="1"/>
</dbReference>
<dbReference type="FunFam" id="3.40.50.620:FF:000038">
    <property type="entry name" value="Argininosuccinate synthase"/>
    <property type="match status" value="1"/>
</dbReference>
<dbReference type="FunFam" id="3.90.1260.10:FF:000007">
    <property type="entry name" value="Argininosuccinate synthase"/>
    <property type="match status" value="1"/>
</dbReference>
<dbReference type="Gene3D" id="3.90.1260.10">
    <property type="entry name" value="Argininosuccinate synthetase, chain A, domain 2"/>
    <property type="match status" value="1"/>
</dbReference>
<dbReference type="Gene3D" id="3.40.50.620">
    <property type="entry name" value="HUPs"/>
    <property type="match status" value="1"/>
</dbReference>
<dbReference type="Gene3D" id="1.20.5.470">
    <property type="entry name" value="Single helix bin"/>
    <property type="match status" value="1"/>
</dbReference>
<dbReference type="HAMAP" id="MF_00005">
    <property type="entry name" value="Arg_succ_synth_type1"/>
    <property type="match status" value="1"/>
</dbReference>
<dbReference type="InterPro" id="IPR048268">
    <property type="entry name" value="Arginosuc_syn_C"/>
</dbReference>
<dbReference type="InterPro" id="IPR048267">
    <property type="entry name" value="Arginosuc_syn_N"/>
</dbReference>
<dbReference type="InterPro" id="IPR001518">
    <property type="entry name" value="Arginosuc_synth"/>
</dbReference>
<dbReference type="InterPro" id="IPR018223">
    <property type="entry name" value="Arginosuc_synth_CS"/>
</dbReference>
<dbReference type="InterPro" id="IPR023434">
    <property type="entry name" value="Arginosuc_synth_type_1_subfam"/>
</dbReference>
<dbReference type="InterPro" id="IPR024074">
    <property type="entry name" value="AS_cat/multimer_dom_body"/>
</dbReference>
<dbReference type="InterPro" id="IPR014729">
    <property type="entry name" value="Rossmann-like_a/b/a_fold"/>
</dbReference>
<dbReference type="NCBIfam" id="TIGR00032">
    <property type="entry name" value="argG"/>
    <property type="match status" value="1"/>
</dbReference>
<dbReference type="NCBIfam" id="NF001770">
    <property type="entry name" value="PRK00509.1"/>
    <property type="match status" value="1"/>
</dbReference>
<dbReference type="PANTHER" id="PTHR11587">
    <property type="entry name" value="ARGININOSUCCINATE SYNTHASE"/>
    <property type="match status" value="1"/>
</dbReference>
<dbReference type="PANTHER" id="PTHR11587:SF2">
    <property type="entry name" value="ARGININOSUCCINATE SYNTHASE"/>
    <property type="match status" value="1"/>
</dbReference>
<dbReference type="Pfam" id="PF20979">
    <property type="entry name" value="Arginosuc_syn_C"/>
    <property type="match status" value="1"/>
</dbReference>
<dbReference type="Pfam" id="PF00764">
    <property type="entry name" value="Arginosuc_synth"/>
    <property type="match status" value="1"/>
</dbReference>
<dbReference type="SUPFAM" id="SSF52402">
    <property type="entry name" value="Adenine nucleotide alpha hydrolases-like"/>
    <property type="match status" value="1"/>
</dbReference>
<dbReference type="SUPFAM" id="SSF69864">
    <property type="entry name" value="Argininosuccinate synthetase, C-terminal domain"/>
    <property type="match status" value="1"/>
</dbReference>
<dbReference type="PROSITE" id="PS00564">
    <property type="entry name" value="ARGININOSUCCIN_SYN_1"/>
    <property type="match status" value="1"/>
</dbReference>
<dbReference type="PROSITE" id="PS00565">
    <property type="entry name" value="ARGININOSUCCIN_SYN_2"/>
    <property type="match status" value="1"/>
</dbReference>
<feature type="chain" id="PRO_0000148589" description="Argininosuccinate synthase">
    <location>
        <begin position="1"/>
        <end position="401"/>
    </location>
</feature>
<feature type="binding site" evidence="1">
    <location>
        <begin position="8"/>
        <end position="16"/>
    </location>
    <ligand>
        <name>ATP</name>
        <dbReference type="ChEBI" id="CHEBI:30616"/>
    </ligand>
</feature>
<feature type="binding site" evidence="1">
    <location>
        <position position="87"/>
    </location>
    <ligand>
        <name>L-citrulline</name>
        <dbReference type="ChEBI" id="CHEBI:57743"/>
    </ligand>
</feature>
<feature type="binding site" evidence="1">
    <location>
        <position position="117"/>
    </location>
    <ligand>
        <name>ATP</name>
        <dbReference type="ChEBI" id="CHEBI:30616"/>
    </ligand>
</feature>
<feature type="binding site" evidence="1">
    <location>
        <position position="119"/>
    </location>
    <ligand>
        <name>L-aspartate</name>
        <dbReference type="ChEBI" id="CHEBI:29991"/>
    </ligand>
</feature>
<feature type="binding site" evidence="1">
    <location>
        <position position="123"/>
    </location>
    <ligand>
        <name>L-aspartate</name>
        <dbReference type="ChEBI" id="CHEBI:29991"/>
    </ligand>
</feature>
<feature type="binding site" evidence="1">
    <location>
        <position position="123"/>
    </location>
    <ligand>
        <name>L-citrulline</name>
        <dbReference type="ChEBI" id="CHEBI:57743"/>
    </ligand>
</feature>
<feature type="binding site" evidence="1">
    <location>
        <position position="124"/>
    </location>
    <ligand>
        <name>L-aspartate</name>
        <dbReference type="ChEBI" id="CHEBI:29991"/>
    </ligand>
</feature>
<feature type="binding site" evidence="1">
    <location>
        <position position="127"/>
    </location>
    <ligand>
        <name>L-citrulline</name>
        <dbReference type="ChEBI" id="CHEBI:57743"/>
    </ligand>
</feature>
<feature type="binding site" evidence="1">
    <location>
        <position position="175"/>
    </location>
    <ligand>
        <name>L-citrulline</name>
        <dbReference type="ChEBI" id="CHEBI:57743"/>
    </ligand>
</feature>
<feature type="binding site" evidence="1">
    <location>
        <position position="259"/>
    </location>
    <ligand>
        <name>L-citrulline</name>
        <dbReference type="ChEBI" id="CHEBI:57743"/>
    </ligand>
</feature>
<feature type="binding site" evidence="1">
    <location>
        <position position="271"/>
    </location>
    <ligand>
        <name>L-citrulline</name>
        <dbReference type="ChEBI" id="CHEBI:57743"/>
    </ligand>
</feature>
<proteinExistence type="inferred from homology"/>
<gene>
    <name evidence="1" type="primary">argG</name>
    <name type="ordered locus">CE1532</name>
</gene>
<protein>
    <recommendedName>
        <fullName evidence="1">Argininosuccinate synthase</fullName>
        <ecNumber evidence="1">6.3.4.5</ecNumber>
    </recommendedName>
    <alternativeName>
        <fullName evidence="1">Citrulline--aspartate ligase</fullName>
    </alternativeName>
</protein>